<name>MATK_ERYGU</name>
<feature type="chain" id="PRO_0000143526" description="Maturase K">
    <location>
        <begin position="1"/>
        <end position="512"/>
    </location>
</feature>
<geneLocation type="chloroplast"/>
<dbReference type="EMBL" id="AY667471">
    <property type="protein sequence ID" value="AAW57937.1"/>
    <property type="molecule type" value="Genomic_DNA"/>
</dbReference>
<dbReference type="GO" id="GO:0009507">
    <property type="term" value="C:chloroplast"/>
    <property type="evidence" value="ECO:0007669"/>
    <property type="project" value="UniProtKB-SubCell"/>
</dbReference>
<dbReference type="GO" id="GO:0003723">
    <property type="term" value="F:RNA binding"/>
    <property type="evidence" value="ECO:0007669"/>
    <property type="project" value="UniProtKB-KW"/>
</dbReference>
<dbReference type="GO" id="GO:0006397">
    <property type="term" value="P:mRNA processing"/>
    <property type="evidence" value="ECO:0007669"/>
    <property type="project" value="UniProtKB-KW"/>
</dbReference>
<dbReference type="GO" id="GO:0008380">
    <property type="term" value="P:RNA splicing"/>
    <property type="evidence" value="ECO:0007669"/>
    <property type="project" value="UniProtKB-UniRule"/>
</dbReference>
<dbReference type="GO" id="GO:0008033">
    <property type="term" value="P:tRNA processing"/>
    <property type="evidence" value="ECO:0007669"/>
    <property type="project" value="UniProtKB-KW"/>
</dbReference>
<dbReference type="HAMAP" id="MF_01390">
    <property type="entry name" value="MatK"/>
    <property type="match status" value="1"/>
</dbReference>
<dbReference type="InterPro" id="IPR024937">
    <property type="entry name" value="Domain_X"/>
</dbReference>
<dbReference type="InterPro" id="IPR002866">
    <property type="entry name" value="Maturase_MatK"/>
</dbReference>
<dbReference type="InterPro" id="IPR024942">
    <property type="entry name" value="Maturase_MatK_N"/>
</dbReference>
<dbReference type="PANTHER" id="PTHR34811">
    <property type="entry name" value="MATURASE K"/>
    <property type="match status" value="1"/>
</dbReference>
<dbReference type="PANTHER" id="PTHR34811:SF1">
    <property type="entry name" value="MATURASE K"/>
    <property type="match status" value="1"/>
</dbReference>
<dbReference type="Pfam" id="PF01348">
    <property type="entry name" value="Intron_maturas2"/>
    <property type="match status" value="1"/>
</dbReference>
<dbReference type="Pfam" id="PF01824">
    <property type="entry name" value="MatK_N"/>
    <property type="match status" value="1"/>
</dbReference>
<proteinExistence type="inferred from homology"/>
<organism>
    <name type="scientific">Erythranthe guttata</name>
    <name type="common">Yellow monkey flower</name>
    <name type="synonym">Mimulus guttatus</name>
    <dbReference type="NCBI Taxonomy" id="4155"/>
    <lineage>
        <taxon>Eukaryota</taxon>
        <taxon>Viridiplantae</taxon>
        <taxon>Streptophyta</taxon>
        <taxon>Embryophyta</taxon>
        <taxon>Tracheophyta</taxon>
        <taxon>Spermatophyta</taxon>
        <taxon>Magnoliopsida</taxon>
        <taxon>eudicotyledons</taxon>
        <taxon>Gunneridae</taxon>
        <taxon>Pentapetalae</taxon>
        <taxon>asterids</taxon>
        <taxon>lamiids</taxon>
        <taxon>Lamiales</taxon>
        <taxon>Phrymaceae</taxon>
        <taxon>Erythranthe</taxon>
    </lineage>
</organism>
<comment type="function">
    <text evidence="1">Usually encoded in the trnK tRNA gene intron. Probably assists in splicing its own and other chloroplast group II introns.</text>
</comment>
<comment type="subcellular location">
    <subcellularLocation>
        <location>Plastid</location>
        <location>Chloroplast</location>
    </subcellularLocation>
</comment>
<comment type="similarity">
    <text evidence="1">Belongs to the intron maturase 2 family. MatK subfamily.</text>
</comment>
<reference key="1">
    <citation type="journal article" date="2005" name="Plant Biol.">
        <title>The Linderniaceae and Gratiolaceae are further lineages distinct from the Scrophulariaceae (Lamiales).</title>
        <authorList>
            <person name="Ramanzadeh R."/>
            <person name="Mueller K.F."/>
            <person name="Fischer E."/>
            <person name="Bartels D."/>
            <person name="Borsch T."/>
        </authorList>
    </citation>
    <scope>NUCLEOTIDE SEQUENCE [GENOMIC DNA]</scope>
</reference>
<protein>
    <recommendedName>
        <fullName evidence="1">Maturase K</fullName>
    </recommendedName>
    <alternativeName>
        <fullName evidence="1">Intron maturase</fullName>
    </alternativeName>
</protein>
<evidence type="ECO:0000255" key="1">
    <source>
        <dbReference type="HAMAP-Rule" id="MF_01390"/>
    </source>
</evidence>
<gene>
    <name evidence="1" type="primary">matK</name>
</gene>
<accession>Q5GA98</accession>
<sequence length="512" mass="60553">MEESQRYLQLERSQQHDFLYPLIFQEYIYAFAYDRGFSRSSLSENPSYNNKSSLLIVKRLITRMYQQNHFIIYYPNDSNQNTFWARRNNLYSPIISEGFAFIVEIPFSLGLIYCLEGKNKKIVKSQNLRSIHSIFPFLEDNFSHLNFVLDILIPQPVHVEILVQTLRCRVKDASSLHLLRFFLNEYCNSKSLITPQKASSSFSKKNKRLFLFLYNSHLCEYESIFVFLRTKSSHLRSTSLGVLLERIYFYGKIERVVNIFVKVKDFQANLRLVKEPCMHYIRYQRKSILASKGTSLFMNKWKSYLVAFWQWHFSQWFHPRRIYINHISNHSLEFLGYLSNVRMNPSVVRSQIIENSFLINNAIKKVDTLIPIIPLIAAXXKAKFXNVLGHPIXKSVRADLSDFNIIDRFGRICRNLSHYYSGSSKKKSLYRIKYILRLSCARTLARKHKSTVRTFLKRLGSEFLEEFLMSEEDVLFFTFPKASSTLWGVYRSRIWYLDIISINDLANHKSKL</sequence>
<keyword id="KW-0150">Chloroplast</keyword>
<keyword id="KW-0507">mRNA processing</keyword>
<keyword id="KW-0934">Plastid</keyword>
<keyword id="KW-0694">RNA-binding</keyword>
<keyword id="KW-0819">tRNA processing</keyword>